<sequence>MPKASEVKKNAAIEHNDKVYVVKDINKLTPSGRAGASLYRMRLYEVTTGAKADESFKADEMIKTADFVRQPVTFSYIDGDEYVFMNSEDYTPYNINKETIEEELLFIAEDTTGLQVMIVNGSAVGIELPPNVELVITETDPSIKGASASARTKPATLSTGLTVQVPEYISSGERIKISTSEHKFVSRADK</sequence>
<accession>Q15SU8</accession>
<dbReference type="EMBL" id="CP000388">
    <property type="protein sequence ID" value="ABG41040.1"/>
    <property type="molecule type" value="Genomic_DNA"/>
</dbReference>
<dbReference type="RefSeq" id="WP_011575306.1">
    <property type="nucleotide sequence ID" value="NC_008228.1"/>
</dbReference>
<dbReference type="SMR" id="Q15SU8"/>
<dbReference type="STRING" id="342610.Patl_2524"/>
<dbReference type="KEGG" id="pat:Patl_2524"/>
<dbReference type="eggNOG" id="COG0231">
    <property type="taxonomic scope" value="Bacteria"/>
</dbReference>
<dbReference type="HOGENOM" id="CLU_074944_2_0_6"/>
<dbReference type="OrthoDB" id="5599402at2"/>
<dbReference type="Proteomes" id="UP000001981">
    <property type="component" value="Chromosome"/>
</dbReference>
<dbReference type="GO" id="GO:0005737">
    <property type="term" value="C:cytoplasm"/>
    <property type="evidence" value="ECO:0007669"/>
    <property type="project" value="InterPro"/>
</dbReference>
<dbReference type="GO" id="GO:0003746">
    <property type="term" value="F:translation elongation factor activity"/>
    <property type="evidence" value="ECO:0007669"/>
    <property type="project" value="UniProtKB-UniRule"/>
</dbReference>
<dbReference type="GO" id="GO:0043043">
    <property type="term" value="P:peptide biosynthetic process"/>
    <property type="evidence" value="ECO:0007669"/>
    <property type="project" value="InterPro"/>
</dbReference>
<dbReference type="CDD" id="cd04470">
    <property type="entry name" value="S1_EF-P_repeat_1"/>
    <property type="match status" value="1"/>
</dbReference>
<dbReference type="CDD" id="cd05794">
    <property type="entry name" value="S1_EF-P_repeat_2"/>
    <property type="match status" value="1"/>
</dbReference>
<dbReference type="FunFam" id="2.40.50.140:FF:000004">
    <property type="entry name" value="Elongation factor P"/>
    <property type="match status" value="1"/>
</dbReference>
<dbReference type="Gene3D" id="2.30.30.30">
    <property type="match status" value="1"/>
</dbReference>
<dbReference type="Gene3D" id="2.40.50.140">
    <property type="entry name" value="Nucleic acid-binding proteins"/>
    <property type="match status" value="2"/>
</dbReference>
<dbReference type="HAMAP" id="MF_00646">
    <property type="entry name" value="EFP"/>
    <property type="match status" value="1"/>
</dbReference>
<dbReference type="InterPro" id="IPR015365">
    <property type="entry name" value="Elong-fact-P_C"/>
</dbReference>
<dbReference type="InterPro" id="IPR012340">
    <property type="entry name" value="NA-bd_OB-fold"/>
</dbReference>
<dbReference type="InterPro" id="IPR014722">
    <property type="entry name" value="Rib_uL2_dom2"/>
</dbReference>
<dbReference type="InterPro" id="IPR020599">
    <property type="entry name" value="Transl_elong_fac_P/YeiP"/>
</dbReference>
<dbReference type="InterPro" id="IPR013185">
    <property type="entry name" value="Transl_elong_KOW-like"/>
</dbReference>
<dbReference type="InterPro" id="IPR011897">
    <property type="entry name" value="Transl_elong_p-like_YeiP"/>
</dbReference>
<dbReference type="InterPro" id="IPR001059">
    <property type="entry name" value="Transl_elong_P/YeiP_cen"/>
</dbReference>
<dbReference type="InterPro" id="IPR013852">
    <property type="entry name" value="Transl_elong_P/YeiP_CS"/>
</dbReference>
<dbReference type="InterPro" id="IPR008991">
    <property type="entry name" value="Translation_prot_SH3-like_sf"/>
</dbReference>
<dbReference type="NCBIfam" id="NF001810">
    <property type="entry name" value="PRK00529.1"/>
    <property type="match status" value="1"/>
</dbReference>
<dbReference type="NCBIfam" id="NF003392">
    <property type="entry name" value="PRK04542.1"/>
    <property type="match status" value="1"/>
</dbReference>
<dbReference type="NCBIfam" id="TIGR02178">
    <property type="entry name" value="yeiP"/>
    <property type="match status" value="1"/>
</dbReference>
<dbReference type="PANTHER" id="PTHR30053">
    <property type="entry name" value="ELONGATION FACTOR P"/>
    <property type="match status" value="1"/>
</dbReference>
<dbReference type="PANTHER" id="PTHR30053:SF14">
    <property type="entry name" value="TRANSLATION ELONGATION FACTOR KOW-LIKE DOMAIN-CONTAINING PROTEIN"/>
    <property type="match status" value="1"/>
</dbReference>
<dbReference type="Pfam" id="PF01132">
    <property type="entry name" value="EFP"/>
    <property type="match status" value="1"/>
</dbReference>
<dbReference type="Pfam" id="PF08207">
    <property type="entry name" value="EFP_N"/>
    <property type="match status" value="1"/>
</dbReference>
<dbReference type="Pfam" id="PF09285">
    <property type="entry name" value="Elong-fact-P_C"/>
    <property type="match status" value="1"/>
</dbReference>
<dbReference type="PIRSF" id="PIRSF005901">
    <property type="entry name" value="EF-P"/>
    <property type="match status" value="1"/>
</dbReference>
<dbReference type="SMART" id="SM01185">
    <property type="entry name" value="EFP"/>
    <property type="match status" value="1"/>
</dbReference>
<dbReference type="SMART" id="SM00841">
    <property type="entry name" value="Elong-fact-P_C"/>
    <property type="match status" value="1"/>
</dbReference>
<dbReference type="SUPFAM" id="SSF50249">
    <property type="entry name" value="Nucleic acid-binding proteins"/>
    <property type="match status" value="2"/>
</dbReference>
<dbReference type="SUPFAM" id="SSF50104">
    <property type="entry name" value="Translation proteins SH3-like domain"/>
    <property type="match status" value="1"/>
</dbReference>
<dbReference type="PROSITE" id="PS01275">
    <property type="entry name" value="EFP"/>
    <property type="match status" value="1"/>
</dbReference>
<proteinExistence type="inferred from homology"/>
<name>EFPL_PSEA6</name>
<reference key="1">
    <citation type="submission" date="2006-06" db="EMBL/GenBank/DDBJ databases">
        <title>Complete sequence of Pseudoalteromonas atlantica T6c.</title>
        <authorList>
            <consortium name="US DOE Joint Genome Institute"/>
            <person name="Copeland A."/>
            <person name="Lucas S."/>
            <person name="Lapidus A."/>
            <person name="Barry K."/>
            <person name="Detter J.C."/>
            <person name="Glavina del Rio T."/>
            <person name="Hammon N."/>
            <person name="Israni S."/>
            <person name="Dalin E."/>
            <person name="Tice H."/>
            <person name="Pitluck S."/>
            <person name="Saunders E."/>
            <person name="Brettin T."/>
            <person name="Bruce D."/>
            <person name="Han C."/>
            <person name="Tapia R."/>
            <person name="Gilna P."/>
            <person name="Schmutz J."/>
            <person name="Larimer F."/>
            <person name="Land M."/>
            <person name="Hauser L."/>
            <person name="Kyrpides N."/>
            <person name="Kim E."/>
            <person name="Karls A.C."/>
            <person name="Bartlett D."/>
            <person name="Higgins B.P."/>
            <person name="Richardson P."/>
        </authorList>
    </citation>
    <scope>NUCLEOTIDE SEQUENCE [LARGE SCALE GENOMIC DNA]</scope>
    <source>
        <strain>T6c / ATCC BAA-1087</strain>
    </source>
</reference>
<comment type="similarity">
    <text evidence="1">Belongs to the elongation factor P family.</text>
</comment>
<evidence type="ECO:0000255" key="1">
    <source>
        <dbReference type="HAMAP-Rule" id="MF_00646"/>
    </source>
</evidence>
<organism>
    <name type="scientific">Pseudoalteromonas atlantica (strain T6c / ATCC BAA-1087)</name>
    <dbReference type="NCBI Taxonomy" id="3042615"/>
    <lineage>
        <taxon>Bacteria</taxon>
        <taxon>Pseudomonadati</taxon>
        <taxon>Pseudomonadota</taxon>
        <taxon>Gammaproteobacteria</taxon>
        <taxon>Alteromonadales</taxon>
        <taxon>Alteromonadaceae</taxon>
        <taxon>Paraglaciecola</taxon>
    </lineage>
</organism>
<gene>
    <name type="ordered locus">Patl_2524</name>
</gene>
<feature type="chain" id="PRO_0000384918" description="Elongation factor P-like protein">
    <location>
        <begin position="1"/>
        <end position="190"/>
    </location>
</feature>
<protein>
    <recommendedName>
        <fullName evidence="1">Elongation factor P-like protein</fullName>
    </recommendedName>
</protein>